<name>NDK3A_XENLA</name>
<comment type="function">
    <text evidence="2 3">Catalyzes the phosphorylation of ribonucleosides and deoxyribonucleoside diphosphates, other than ATP, into the corresponding triphosphates with ATP as the major phosphate donor. The ATP gamma phosphate is transferred to the nucleoside diphosphate beta phosphate via a ping-pong mechanism, using a phosphorylated active-site intermediate. Through the catalyzed exchange of gamma-phosphate between di- and triphosphonucleosides participates in regulation of intracellular nucleotide homeostasis (By similarity). Required for ciliary function during renal development (By similarity).</text>
</comment>
<comment type="function">
    <text evidence="2">Independently of its kinase activity, facilitates mitochondrial tethering prior to membrane fusion through its direct membrane-binding and hexamerization. Implicated in repair of both single- and double-stranded breaks in DNA, independently of its kinase activity.</text>
</comment>
<comment type="catalytic activity">
    <reaction evidence="2">
        <text>a 2'-deoxyribonucleoside 5'-diphosphate + ATP = a 2'-deoxyribonucleoside 5'-triphosphate + ADP</text>
        <dbReference type="Rhea" id="RHEA:44640"/>
        <dbReference type="ChEBI" id="CHEBI:30616"/>
        <dbReference type="ChEBI" id="CHEBI:61560"/>
        <dbReference type="ChEBI" id="CHEBI:73316"/>
        <dbReference type="ChEBI" id="CHEBI:456216"/>
        <dbReference type="EC" id="2.7.4.6"/>
    </reaction>
    <physiologicalReaction direction="left-to-right" evidence="2">
        <dbReference type="Rhea" id="RHEA:44641"/>
    </physiologicalReaction>
</comment>
<comment type="catalytic activity">
    <reaction evidence="2">
        <text>a ribonucleoside 5'-diphosphate + ATP = a ribonucleoside 5'-triphosphate + ADP</text>
        <dbReference type="Rhea" id="RHEA:18113"/>
        <dbReference type="ChEBI" id="CHEBI:30616"/>
        <dbReference type="ChEBI" id="CHEBI:57930"/>
        <dbReference type="ChEBI" id="CHEBI:61557"/>
        <dbReference type="ChEBI" id="CHEBI:456216"/>
        <dbReference type="EC" id="2.7.4.6"/>
    </reaction>
    <physiologicalReaction direction="left-to-right" evidence="2">
        <dbReference type="Rhea" id="RHEA:18114"/>
    </physiologicalReaction>
</comment>
<comment type="cofactor">
    <cofactor evidence="1">
        <name>Mg(2+)</name>
        <dbReference type="ChEBI" id="CHEBI:18420"/>
    </cofactor>
</comment>
<comment type="subunit">
    <text evidence="2">Homohexamer.</text>
</comment>
<comment type="subcellular location">
    <subcellularLocation>
        <location evidence="2">Mitochondrion outer membrane</location>
        <topology evidence="2">Peripheral membrane protein</topology>
    </subcellularLocation>
    <subcellularLocation>
        <location evidence="2">Cytoplasm</location>
    </subcellularLocation>
    <subcellularLocation>
        <location evidence="4">Cytoplasm</location>
        <location evidence="4">Cytoskeleton</location>
        <location evidence="4">Cilium basal body</location>
    </subcellularLocation>
</comment>
<comment type="domain">
    <text evidence="2">The N-terminal hydrophobic region (1-17) is critical for mitochondrial outer membrane targeting and phosphatidic acid binding.</text>
</comment>
<comment type="disruption phenotype">
    <text evidence="5">Morpholino knockdown of the protein in the embryo causes pronephric malformations.</text>
</comment>
<comment type="similarity">
    <text evidence="7">Belongs to the NDK family.</text>
</comment>
<accession>A2VD68</accession>
<organism>
    <name type="scientific">Xenopus laevis</name>
    <name type="common">African clawed frog</name>
    <dbReference type="NCBI Taxonomy" id="8355"/>
    <lineage>
        <taxon>Eukaryota</taxon>
        <taxon>Metazoa</taxon>
        <taxon>Chordata</taxon>
        <taxon>Craniata</taxon>
        <taxon>Vertebrata</taxon>
        <taxon>Euteleostomi</taxon>
        <taxon>Amphibia</taxon>
        <taxon>Batrachia</taxon>
        <taxon>Anura</taxon>
        <taxon>Pipoidea</taxon>
        <taxon>Pipidae</taxon>
        <taxon>Xenopodinae</taxon>
        <taxon>Xenopus</taxon>
        <taxon>Xenopus</taxon>
    </lineage>
</organism>
<sequence length="169" mass="19401">MICLVLTIFAHIFPSAWTGINERTFLAIKPDGYQRRLVGEIIRRFEKKGFCLVALKIMQASEKLLRQHYIALQDKPFYDRLVKYMGSGPVVAMVWQGLDVVKTARVMIGETNPAHSLPGTIRGDFCIDVGRNVIHGSDSRESAQREIALWFQPDELVCWQDSAERWIYE</sequence>
<gene>
    <name evidence="8" type="primary">nme3.S</name>
    <name evidence="6" type="synonym">nme3-a</name>
</gene>
<keyword id="KW-0966">Cell projection</keyword>
<keyword id="KW-0963">Cytoplasm</keyword>
<keyword id="KW-0206">Cytoskeleton</keyword>
<keyword id="KW-0418">Kinase</keyword>
<keyword id="KW-0472">Membrane</keyword>
<keyword id="KW-0496">Mitochondrion</keyword>
<keyword id="KW-1000">Mitochondrion outer membrane</keyword>
<keyword id="KW-1185">Reference proteome</keyword>
<keyword id="KW-0808">Transferase</keyword>
<dbReference type="EC" id="2.7.4.6" evidence="2"/>
<dbReference type="EMBL" id="BC129549">
    <property type="protein sequence ID" value="AAI29550.1"/>
    <property type="molecule type" value="mRNA"/>
</dbReference>
<dbReference type="RefSeq" id="NP_001091338.1">
    <property type="nucleotide sequence ID" value="NM_001097869.1"/>
</dbReference>
<dbReference type="SMR" id="A2VD68"/>
<dbReference type="DNASU" id="100037175"/>
<dbReference type="GeneID" id="100037175"/>
<dbReference type="KEGG" id="xla:100037175"/>
<dbReference type="AGR" id="Xenbase:XB-GENE-6255244"/>
<dbReference type="CTD" id="100037175"/>
<dbReference type="Xenbase" id="XB-GENE-6255244">
    <property type="gene designation" value="nme3.S"/>
</dbReference>
<dbReference type="OrthoDB" id="2162449at2759"/>
<dbReference type="Proteomes" id="UP000186698">
    <property type="component" value="Chromosome 9_10S"/>
</dbReference>
<dbReference type="Bgee" id="100037175">
    <property type="expression patterns" value="Expressed in lung and 20 other cell types or tissues"/>
</dbReference>
<dbReference type="GO" id="GO:0036064">
    <property type="term" value="C:ciliary basal body"/>
    <property type="evidence" value="ECO:0000250"/>
    <property type="project" value="UniProtKB"/>
</dbReference>
<dbReference type="GO" id="GO:0005737">
    <property type="term" value="C:cytoplasm"/>
    <property type="evidence" value="ECO:0000250"/>
    <property type="project" value="UniProtKB"/>
</dbReference>
<dbReference type="GO" id="GO:0005741">
    <property type="term" value="C:mitochondrial outer membrane"/>
    <property type="evidence" value="ECO:0000250"/>
    <property type="project" value="UniProtKB"/>
</dbReference>
<dbReference type="GO" id="GO:0004550">
    <property type="term" value="F:nucleoside diphosphate kinase activity"/>
    <property type="evidence" value="ECO:0000250"/>
    <property type="project" value="UniProtKB"/>
</dbReference>
<dbReference type="GO" id="GO:0006241">
    <property type="term" value="P:CTP biosynthetic process"/>
    <property type="evidence" value="ECO:0007669"/>
    <property type="project" value="InterPro"/>
</dbReference>
<dbReference type="GO" id="GO:0006281">
    <property type="term" value="P:DNA repair"/>
    <property type="evidence" value="ECO:0000250"/>
    <property type="project" value="UniProtKB"/>
</dbReference>
<dbReference type="GO" id="GO:0006183">
    <property type="term" value="P:GTP biosynthetic process"/>
    <property type="evidence" value="ECO:0007669"/>
    <property type="project" value="InterPro"/>
</dbReference>
<dbReference type="GO" id="GO:0008053">
    <property type="term" value="P:mitochondrial fusion"/>
    <property type="evidence" value="ECO:0000250"/>
    <property type="project" value="UniProtKB"/>
</dbReference>
<dbReference type="GO" id="GO:0009142">
    <property type="term" value="P:nucleoside triphosphate biosynthetic process"/>
    <property type="evidence" value="ECO:0000250"/>
    <property type="project" value="UniProtKB"/>
</dbReference>
<dbReference type="GO" id="GO:0006228">
    <property type="term" value="P:UTP biosynthetic process"/>
    <property type="evidence" value="ECO:0007669"/>
    <property type="project" value="InterPro"/>
</dbReference>
<dbReference type="CDD" id="cd04413">
    <property type="entry name" value="NDPk_I"/>
    <property type="match status" value="1"/>
</dbReference>
<dbReference type="FunFam" id="3.30.70.141:FF:000002">
    <property type="entry name" value="Nucleoside diphosphate kinase"/>
    <property type="match status" value="1"/>
</dbReference>
<dbReference type="Gene3D" id="3.30.70.141">
    <property type="entry name" value="Nucleoside diphosphate kinase-like domain"/>
    <property type="match status" value="1"/>
</dbReference>
<dbReference type="HAMAP" id="MF_00451">
    <property type="entry name" value="NDP_kinase"/>
    <property type="match status" value="1"/>
</dbReference>
<dbReference type="InterPro" id="IPR034907">
    <property type="entry name" value="NDK-like_dom"/>
</dbReference>
<dbReference type="InterPro" id="IPR036850">
    <property type="entry name" value="NDK-like_dom_sf"/>
</dbReference>
<dbReference type="InterPro" id="IPR001564">
    <property type="entry name" value="Nucleoside_diP_kinase"/>
</dbReference>
<dbReference type="NCBIfam" id="NF001908">
    <property type="entry name" value="PRK00668.1"/>
    <property type="match status" value="1"/>
</dbReference>
<dbReference type="PANTHER" id="PTHR11349">
    <property type="entry name" value="NUCLEOSIDE DIPHOSPHATE KINASE"/>
    <property type="match status" value="1"/>
</dbReference>
<dbReference type="Pfam" id="PF00334">
    <property type="entry name" value="NDK"/>
    <property type="match status" value="1"/>
</dbReference>
<dbReference type="PRINTS" id="PR01243">
    <property type="entry name" value="NUCDPKINASE"/>
</dbReference>
<dbReference type="SMART" id="SM00562">
    <property type="entry name" value="NDK"/>
    <property type="match status" value="1"/>
</dbReference>
<dbReference type="SUPFAM" id="SSF54919">
    <property type="entry name" value="Nucleoside diphosphate kinase, NDK"/>
    <property type="match status" value="1"/>
</dbReference>
<dbReference type="PROSITE" id="PS51374">
    <property type="entry name" value="NDPK_LIKE"/>
    <property type="match status" value="1"/>
</dbReference>
<evidence type="ECO:0000250" key="1">
    <source>
        <dbReference type="UniProtKB" id="P22392"/>
    </source>
</evidence>
<evidence type="ECO:0000250" key="2">
    <source>
        <dbReference type="UniProtKB" id="Q13232"/>
    </source>
</evidence>
<evidence type="ECO:0000250" key="3">
    <source>
        <dbReference type="UniProtKB" id="Q9PTF3"/>
    </source>
</evidence>
<evidence type="ECO:0000250" key="4">
    <source>
        <dbReference type="UniProtKB" id="Q9WV85"/>
    </source>
</evidence>
<evidence type="ECO:0000269" key="5">
    <source>
    </source>
</evidence>
<evidence type="ECO:0000303" key="6">
    <source>
    </source>
</evidence>
<evidence type="ECO:0000305" key="7"/>
<evidence type="ECO:0000312" key="8">
    <source>
        <dbReference type="Xenbase" id="XB-GENE-6255244"/>
    </source>
</evidence>
<reference key="1">
    <citation type="submission" date="2006-12" db="EMBL/GenBank/DDBJ databases">
        <authorList>
            <consortium name="NIH - Xenopus Gene Collection (XGC) project"/>
        </authorList>
    </citation>
    <scope>NUCLEOTIDE SEQUENCE [LARGE SCALE MRNA]</scope>
    <source>
        <tissue>Spleen</tissue>
    </source>
</reference>
<reference key="2">
    <citation type="journal article" date="2018" name="J. Biol. Chem.">
        <title>The nucleoside-diphosphate kinase NME3 associates with nephronophthisis proteins and is required for ciliary function during renal development.</title>
        <authorList>
            <person name="Hoff S."/>
            <person name="Epting D."/>
            <person name="Falk N."/>
            <person name="Schroda S."/>
            <person name="Braun D.A."/>
            <person name="Halbritter J."/>
            <person name="Hildebrandt F."/>
            <person name="Kramer-Zucker A."/>
            <person name="Bergmann C."/>
            <person name="Walz G."/>
            <person name="Lienkamp S.S."/>
        </authorList>
    </citation>
    <scope>DISRUPTION PHENOTYPE</scope>
    <scope>FUNCTION</scope>
</reference>
<proteinExistence type="evidence at transcript level"/>
<feature type="chain" id="PRO_5033207263" description="Nucleoside diphosphate kinase 3-A">
    <location>
        <begin position="1"/>
        <end position="169"/>
    </location>
</feature>
<feature type="active site" description="Pros-phosphohistidine intermediate" evidence="1">
    <location>
        <position position="135"/>
    </location>
</feature>
<feature type="binding site" evidence="2">
    <location>
        <position position="29"/>
    </location>
    <ligand>
        <name>ADP</name>
        <dbReference type="ChEBI" id="CHEBI:456216"/>
    </ligand>
</feature>
<feature type="binding site" evidence="2">
    <location>
        <position position="105"/>
    </location>
    <ligand>
        <name>ADP</name>
        <dbReference type="ChEBI" id="CHEBI:456216"/>
    </ligand>
</feature>
<feature type="binding site" evidence="2">
    <location>
        <position position="111"/>
    </location>
    <ligand>
        <name>ADP</name>
        <dbReference type="ChEBI" id="CHEBI:456216"/>
    </ligand>
</feature>
<feature type="binding site" evidence="2">
    <location>
        <position position="122"/>
    </location>
    <ligand>
        <name>ADP</name>
        <dbReference type="ChEBI" id="CHEBI:456216"/>
    </ligand>
</feature>
<feature type="binding site" evidence="2">
    <location>
        <position position="129"/>
    </location>
    <ligand>
        <name>ADP</name>
        <dbReference type="ChEBI" id="CHEBI:456216"/>
    </ligand>
</feature>
<feature type="binding site" evidence="2">
    <location>
        <position position="132"/>
    </location>
    <ligand>
        <name>ADP</name>
        <dbReference type="ChEBI" id="CHEBI:456216"/>
    </ligand>
</feature>
<protein>
    <recommendedName>
        <fullName>Nucleoside diphosphate kinase 3-A</fullName>
        <ecNumber evidence="2">2.7.4.6</ecNumber>
    </recommendedName>
</protein>